<reference key="1">
    <citation type="journal article" date="2004" name="Nature">
        <title>Genome duplication in the teleost fish Tetraodon nigroviridis reveals the early vertebrate proto-karyotype.</title>
        <authorList>
            <person name="Jaillon O."/>
            <person name="Aury J.-M."/>
            <person name="Brunet F."/>
            <person name="Petit J.-L."/>
            <person name="Stange-Thomann N."/>
            <person name="Mauceli E."/>
            <person name="Bouneau L."/>
            <person name="Fischer C."/>
            <person name="Ozouf-Costaz C."/>
            <person name="Bernot A."/>
            <person name="Nicaud S."/>
            <person name="Jaffe D."/>
            <person name="Fisher S."/>
            <person name="Lutfalla G."/>
            <person name="Dossat C."/>
            <person name="Segurens B."/>
            <person name="Dasilva C."/>
            <person name="Salanoubat M."/>
            <person name="Levy M."/>
            <person name="Boudet N."/>
            <person name="Castellano S."/>
            <person name="Anthouard V."/>
            <person name="Jubin C."/>
            <person name="Castelli V."/>
            <person name="Katinka M."/>
            <person name="Vacherie B."/>
            <person name="Biemont C."/>
            <person name="Skalli Z."/>
            <person name="Cattolico L."/>
            <person name="Poulain J."/>
            <person name="De Berardinis V."/>
            <person name="Cruaud C."/>
            <person name="Duprat S."/>
            <person name="Brottier P."/>
            <person name="Coutanceau J.-P."/>
            <person name="Gouzy J."/>
            <person name="Parra G."/>
            <person name="Lardier G."/>
            <person name="Chapple C."/>
            <person name="McKernan K.J."/>
            <person name="McEwan P."/>
            <person name="Bosak S."/>
            <person name="Kellis M."/>
            <person name="Volff J.-N."/>
            <person name="Guigo R."/>
            <person name="Zody M.C."/>
            <person name="Mesirov J."/>
            <person name="Lindblad-Toh K."/>
            <person name="Birren B."/>
            <person name="Nusbaum C."/>
            <person name="Kahn D."/>
            <person name="Robinson-Rechavi M."/>
            <person name="Laudet V."/>
            <person name="Schachter V."/>
            <person name="Quetier F."/>
            <person name="Saurin W."/>
            <person name="Scarpelli C."/>
            <person name="Wincker P."/>
            <person name="Lander E.S."/>
            <person name="Weissenbach J."/>
            <person name="Roest Crollius H."/>
        </authorList>
    </citation>
    <scope>NUCLEOTIDE SEQUENCE [LARGE SCALE GENOMIC DNA]</scope>
</reference>
<keyword id="KW-0458">Lysosome</keyword>
<keyword id="KW-0472">Membrane</keyword>
<keyword id="KW-1185">Reference proteome</keyword>
<gene>
    <name type="primary">ccz1</name>
    <name type="ORF">GSTENG00024165001</name>
</gene>
<feature type="chain" id="PRO_0000327402" description="Vacuolar fusion protein CCZ1 homolog">
    <location>
        <begin position="1"/>
        <end position="480"/>
    </location>
</feature>
<proteinExistence type="inferred from homology"/>
<dbReference type="EMBL" id="CAAE01014738">
    <property type="protein sequence ID" value="CAG04447.1"/>
    <property type="molecule type" value="Genomic_DNA"/>
</dbReference>
<dbReference type="SMR" id="Q4S4I5"/>
<dbReference type="FunCoup" id="Q4S4I5">
    <property type="interactions" value="1328"/>
</dbReference>
<dbReference type="STRING" id="99883.ENSTNIP00000002944"/>
<dbReference type="Ensembl" id="ENSTNIT00000016070.1">
    <property type="protein sequence ID" value="ENSTNIP00000015860.1"/>
    <property type="gene ID" value="ENSTNIG00000012884.1"/>
</dbReference>
<dbReference type="KEGG" id="tng:GSTEN00024165G001"/>
<dbReference type="GeneTree" id="ENSGT00390000004713"/>
<dbReference type="HOGENOM" id="CLU_037828_2_0_1"/>
<dbReference type="InParanoid" id="Q4S4I5"/>
<dbReference type="OrthoDB" id="240546at2759"/>
<dbReference type="Proteomes" id="UP000007303">
    <property type="component" value="Unassembled WGS sequence"/>
</dbReference>
<dbReference type="GO" id="GO:0005765">
    <property type="term" value="C:lysosomal membrane"/>
    <property type="evidence" value="ECO:0007669"/>
    <property type="project" value="UniProtKB-SubCell"/>
</dbReference>
<dbReference type="GO" id="GO:0035658">
    <property type="term" value="C:Mon1-Ccz1 complex"/>
    <property type="evidence" value="ECO:0007669"/>
    <property type="project" value="InterPro"/>
</dbReference>
<dbReference type="GO" id="GO:0016192">
    <property type="term" value="P:vesicle-mediated transport"/>
    <property type="evidence" value="ECO:0007669"/>
    <property type="project" value="InterPro"/>
</dbReference>
<dbReference type="InterPro" id="IPR013176">
    <property type="entry name" value="Ccz1"/>
</dbReference>
<dbReference type="InterPro" id="IPR043987">
    <property type="entry name" value="CCZ1/INTU/HSP4_longin_1"/>
</dbReference>
<dbReference type="InterPro" id="IPR043989">
    <property type="entry name" value="CCZ1/INTU/HSP4_longin_3"/>
</dbReference>
<dbReference type="InterPro" id="IPR043988">
    <property type="entry name" value="CCZ1/INTU_longin_2"/>
</dbReference>
<dbReference type="PANTHER" id="PTHR13056">
    <property type="entry name" value="VACUOLAR FUSION PROTEIN CCZ1 HOMOLOG-RELATED"/>
    <property type="match status" value="1"/>
</dbReference>
<dbReference type="PANTHER" id="PTHR13056:SF0">
    <property type="entry name" value="VACUOLAR FUSION PROTEIN CCZ1 HOMOLOG-RELATED"/>
    <property type="match status" value="1"/>
</dbReference>
<dbReference type="Pfam" id="PF19031">
    <property type="entry name" value="Intu_longin_1"/>
    <property type="match status" value="1"/>
</dbReference>
<dbReference type="Pfam" id="PF19032">
    <property type="entry name" value="Intu_longin_2"/>
    <property type="match status" value="1"/>
</dbReference>
<dbReference type="Pfam" id="PF19033">
    <property type="entry name" value="Intu_longin_3"/>
    <property type="match status" value="1"/>
</dbReference>
<name>CCZ1_TETNG</name>
<protein>
    <recommendedName>
        <fullName>Vacuolar fusion protein CCZ1 homolog</fullName>
    </recommendedName>
</protein>
<evidence type="ECO:0000250" key="1"/>
<evidence type="ECO:0000305" key="2"/>
<sequence length="480" mass="55724">MQMISPRMASGMQEKQYTPSLLSFFIYNPTFGPREGEEEKKILFYHPSDVEKNEKIRNVGLCEAIVQFTRTFCPTKPAKSLHTQKNRQFFFEPENNFWIVMVVRNPMIEKPNKDGKSQTIEYQEEEILDTVYGAVVRQCYSMYKLFNGTFARAMETGGVELLMQKLEKFFYKYLQTLHLQSSDLLDVFGGISFFPLDKMTYLKIQSFVNRVEESLSLVKYTAFLYNDQLIWSGLEQDDMRILYKYLTTSLFPRHTEPELAGRDSPLRPELAGNLLHYGRFLTGPLNLNDPEAKFRFPKIFVSAEDGYEELHLIVYKAMSAAACFMISASVELTRDFCEQLDKLVGPQLTLLASDICEQFTINRRISGPEKEPQFKFIYFNHMNLAEKSTIHMRKTASVCLTSVHPDLMKILGDINCDFARVDEDEEIIVKAMTDYWVVGKKSDQRELYVILNQKNANLIEVNEEVKKLCATQFNNIFFLD</sequence>
<accession>Q4S4I5</accession>
<comment type="subcellular location">
    <subcellularLocation>
        <location evidence="1">Lysosome membrane</location>
    </subcellularLocation>
</comment>
<comment type="similarity">
    <text evidence="2">Belongs to the CCZ1 family.</text>
</comment>
<organism>
    <name type="scientific">Tetraodon nigroviridis</name>
    <name type="common">Spotted green pufferfish</name>
    <name type="synonym">Chelonodon nigroviridis</name>
    <dbReference type="NCBI Taxonomy" id="99883"/>
    <lineage>
        <taxon>Eukaryota</taxon>
        <taxon>Metazoa</taxon>
        <taxon>Chordata</taxon>
        <taxon>Craniata</taxon>
        <taxon>Vertebrata</taxon>
        <taxon>Euteleostomi</taxon>
        <taxon>Actinopterygii</taxon>
        <taxon>Neopterygii</taxon>
        <taxon>Teleostei</taxon>
        <taxon>Neoteleostei</taxon>
        <taxon>Acanthomorphata</taxon>
        <taxon>Eupercaria</taxon>
        <taxon>Tetraodontiformes</taxon>
        <taxon>Tetradontoidea</taxon>
        <taxon>Tetraodontidae</taxon>
        <taxon>Tetraodon</taxon>
    </lineage>
</organism>